<comment type="function">
    <text evidence="1">Binds to the 23S rRNA.</text>
</comment>
<comment type="similarity">
    <text evidence="1">Belongs to the bacterial ribosomal protein bL9 family.</text>
</comment>
<sequence>MQVILLDKVVNLGGLGDIVKVKDGYARNFLIPTGAARRATASAKAEFEAKRVELEKQAAEKLAAAQQLGEKLNGVNVKLTQKAGVDGRLFGSVTNADIAEELTKAGFAVAKSQVRLVNGPIKTVGDATVVVALHTDVSVEVTVSVYGDHS</sequence>
<accession>A9BNG0</accession>
<organism>
    <name type="scientific">Delftia acidovorans (strain DSM 14801 / SPH-1)</name>
    <dbReference type="NCBI Taxonomy" id="398578"/>
    <lineage>
        <taxon>Bacteria</taxon>
        <taxon>Pseudomonadati</taxon>
        <taxon>Pseudomonadota</taxon>
        <taxon>Betaproteobacteria</taxon>
        <taxon>Burkholderiales</taxon>
        <taxon>Comamonadaceae</taxon>
        <taxon>Delftia</taxon>
    </lineage>
</organism>
<feature type="chain" id="PRO_1000126899" description="Large ribosomal subunit protein bL9">
    <location>
        <begin position="1"/>
        <end position="150"/>
    </location>
</feature>
<reference key="1">
    <citation type="submission" date="2007-11" db="EMBL/GenBank/DDBJ databases">
        <title>Complete sequence of Delftia acidovorans DSM 14801 / SPH-1.</title>
        <authorList>
            <person name="Copeland A."/>
            <person name="Lucas S."/>
            <person name="Lapidus A."/>
            <person name="Barry K."/>
            <person name="Glavina del Rio T."/>
            <person name="Dalin E."/>
            <person name="Tice H."/>
            <person name="Pitluck S."/>
            <person name="Lowry S."/>
            <person name="Clum A."/>
            <person name="Schmutz J."/>
            <person name="Larimer F."/>
            <person name="Land M."/>
            <person name="Hauser L."/>
            <person name="Kyrpides N."/>
            <person name="Kim E."/>
            <person name="Schleheck D."/>
            <person name="Richardson P."/>
        </authorList>
    </citation>
    <scope>NUCLEOTIDE SEQUENCE [LARGE SCALE GENOMIC DNA]</scope>
    <source>
        <strain>DSM 14801 / SPH-1</strain>
    </source>
</reference>
<proteinExistence type="inferred from homology"/>
<gene>
    <name evidence="1" type="primary">rplI</name>
    <name type="ordered locus">Daci_5226</name>
</gene>
<protein>
    <recommendedName>
        <fullName evidence="1">Large ribosomal subunit protein bL9</fullName>
    </recommendedName>
    <alternativeName>
        <fullName evidence="2">50S ribosomal protein L9</fullName>
    </alternativeName>
</protein>
<keyword id="KW-1185">Reference proteome</keyword>
<keyword id="KW-0687">Ribonucleoprotein</keyword>
<keyword id="KW-0689">Ribosomal protein</keyword>
<keyword id="KW-0694">RNA-binding</keyword>
<keyword id="KW-0699">rRNA-binding</keyword>
<name>RL9_DELAS</name>
<evidence type="ECO:0000255" key="1">
    <source>
        <dbReference type="HAMAP-Rule" id="MF_00503"/>
    </source>
</evidence>
<evidence type="ECO:0000305" key="2"/>
<dbReference type="EMBL" id="CP000884">
    <property type="protein sequence ID" value="ABX37855.1"/>
    <property type="molecule type" value="Genomic_DNA"/>
</dbReference>
<dbReference type="RefSeq" id="WP_012207025.1">
    <property type="nucleotide sequence ID" value="NC_010002.1"/>
</dbReference>
<dbReference type="SMR" id="A9BNG0"/>
<dbReference type="STRING" id="398578.Daci_5226"/>
<dbReference type="GeneID" id="24115594"/>
<dbReference type="KEGG" id="dac:Daci_5226"/>
<dbReference type="eggNOG" id="COG0359">
    <property type="taxonomic scope" value="Bacteria"/>
</dbReference>
<dbReference type="HOGENOM" id="CLU_078938_4_1_4"/>
<dbReference type="Proteomes" id="UP000000784">
    <property type="component" value="Chromosome"/>
</dbReference>
<dbReference type="GO" id="GO:1990904">
    <property type="term" value="C:ribonucleoprotein complex"/>
    <property type="evidence" value="ECO:0007669"/>
    <property type="project" value="UniProtKB-KW"/>
</dbReference>
<dbReference type="GO" id="GO:0005840">
    <property type="term" value="C:ribosome"/>
    <property type="evidence" value="ECO:0007669"/>
    <property type="project" value="UniProtKB-KW"/>
</dbReference>
<dbReference type="GO" id="GO:0019843">
    <property type="term" value="F:rRNA binding"/>
    <property type="evidence" value="ECO:0007669"/>
    <property type="project" value="UniProtKB-UniRule"/>
</dbReference>
<dbReference type="GO" id="GO:0003735">
    <property type="term" value="F:structural constituent of ribosome"/>
    <property type="evidence" value="ECO:0007669"/>
    <property type="project" value="InterPro"/>
</dbReference>
<dbReference type="GO" id="GO:0006412">
    <property type="term" value="P:translation"/>
    <property type="evidence" value="ECO:0007669"/>
    <property type="project" value="UniProtKB-UniRule"/>
</dbReference>
<dbReference type="Gene3D" id="3.10.430.100">
    <property type="entry name" value="Ribosomal protein L9, C-terminal domain"/>
    <property type="match status" value="1"/>
</dbReference>
<dbReference type="Gene3D" id="3.40.5.10">
    <property type="entry name" value="Ribosomal protein L9, N-terminal domain"/>
    <property type="match status" value="1"/>
</dbReference>
<dbReference type="HAMAP" id="MF_00503">
    <property type="entry name" value="Ribosomal_bL9"/>
    <property type="match status" value="1"/>
</dbReference>
<dbReference type="InterPro" id="IPR000244">
    <property type="entry name" value="Ribosomal_bL9"/>
</dbReference>
<dbReference type="InterPro" id="IPR009027">
    <property type="entry name" value="Ribosomal_bL9/RNase_H1_N"/>
</dbReference>
<dbReference type="InterPro" id="IPR020594">
    <property type="entry name" value="Ribosomal_bL9_bac/chp"/>
</dbReference>
<dbReference type="InterPro" id="IPR020069">
    <property type="entry name" value="Ribosomal_bL9_C"/>
</dbReference>
<dbReference type="InterPro" id="IPR036791">
    <property type="entry name" value="Ribosomal_bL9_C_sf"/>
</dbReference>
<dbReference type="InterPro" id="IPR020070">
    <property type="entry name" value="Ribosomal_bL9_N"/>
</dbReference>
<dbReference type="InterPro" id="IPR036935">
    <property type="entry name" value="Ribosomal_bL9_N_sf"/>
</dbReference>
<dbReference type="NCBIfam" id="TIGR00158">
    <property type="entry name" value="L9"/>
    <property type="match status" value="1"/>
</dbReference>
<dbReference type="PANTHER" id="PTHR21368">
    <property type="entry name" value="50S RIBOSOMAL PROTEIN L9"/>
    <property type="match status" value="1"/>
</dbReference>
<dbReference type="Pfam" id="PF03948">
    <property type="entry name" value="Ribosomal_L9_C"/>
    <property type="match status" value="1"/>
</dbReference>
<dbReference type="Pfam" id="PF01281">
    <property type="entry name" value="Ribosomal_L9_N"/>
    <property type="match status" value="1"/>
</dbReference>
<dbReference type="SUPFAM" id="SSF55658">
    <property type="entry name" value="L9 N-domain-like"/>
    <property type="match status" value="1"/>
</dbReference>
<dbReference type="SUPFAM" id="SSF55653">
    <property type="entry name" value="Ribosomal protein L9 C-domain"/>
    <property type="match status" value="1"/>
</dbReference>
<dbReference type="PROSITE" id="PS00651">
    <property type="entry name" value="RIBOSOMAL_L9"/>
    <property type="match status" value="1"/>
</dbReference>